<feature type="chain" id="PRO_1000137519" description="Chaperone protein TorD">
    <location>
        <begin position="1"/>
        <end position="199"/>
    </location>
</feature>
<comment type="function">
    <text evidence="1">Involved in the biogenesis of TorA. Acts on TorA before the insertion of the molybdenum cofactor and, as a result, probably favors a conformation of the apoenzyme that is competent for acquiring the cofactor.</text>
</comment>
<comment type="subcellular location">
    <subcellularLocation>
        <location evidence="1">Cytoplasm</location>
    </subcellularLocation>
</comment>
<comment type="similarity">
    <text evidence="1">Belongs to the TorD/DmsD family. TorD subfamily.</text>
</comment>
<name>TORD_SHIB3</name>
<gene>
    <name evidence="1" type="primary">torD</name>
    <name type="ordered locus">SbBS512_E2316</name>
</gene>
<proteinExistence type="inferred from homology"/>
<dbReference type="EMBL" id="CP001063">
    <property type="protein sequence ID" value="ACD07538.1"/>
    <property type="molecule type" value="Genomic_DNA"/>
</dbReference>
<dbReference type="RefSeq" id="WP_000209865.1">
    <property type="nucleotide sequence ID" value="NC_010658.1"/>
</dbReference>
<dbReference type="SMR" id="B2TTQ0"/>
<dbReference type="STRING" id="344609.SbBS512_E2316"/>
<dbReference type="KEGG" id="sbc:SbBS512_E2316"/>
<dbReference type="HOGENOM" id="CLU_077650_4_0_6"/>
<dbReference type="Proteomes" id="UP000001030">
    <property type="component" value="Chromosome"/>
</dbReference>
<dbReference type="GO" id="GO:0005737">
    <property type="term" value="C:cytoplasm"/>
    <property type="evidence" value="ECO:0007669"/>
    <property type="project" value="UniProtKB-SubCell"/>
</dbReference>
<dbReference type="GO" id="GO:0051259">
    <property type="term" value="P:protein complex oligomerization"/>
    <property type="evidence" value="ECO:0007669"/>
    <property type="project" value="InterPro"/>
</dbReference>
<dbReference type="GO" id="GO:0006457">
    <property type="term" value="P:protein folding"/>
    <property type="evidence" value="ECO:0007669"/>
    <property type="project" value="UniProtKB-UniRule"/>
</dbReference>
<dbReference type="FunFam" id="1.20.120.1820:FF:000001">
    <property type="entry name" value="Chaperone protein TorD"/>
    <property type="match status" value="1"/>
</dbReference>
<dbReference type="FunFam" id="1.20.1280.20:FF:000003">
    <property type="entry name" value="Chaperone protein TorD"/>
    <property type="match status" value="1"/>
</dbReference>
<dbReference type="Gene3D" id="1.20.120.1820">
    <property type="match status" value="1"/>
</dbReference>
<dbReference type="Gene3D" id="1.20.1280.20">
    <property type="entry name" value="HscB, C-terminal domain"/>
    <property type="match status" value="1"/>
</dbReference>
<dbReference type="HAMAP" id="MF_01150">
    <property type="entry name" value="TorD"/>
    <property type="match status" value="1"/>
</dbReference>
<dbReference type="InterPro" id="IPR023069">
    <property type="entry name" value="Chaperone_TorD"/>
</dbReference>
<dbReference type="InterPro" id="IPR020945">
    <property type="entry name" value="DMSO/NO3_reduct_chaperone"/>
</dbReference>
<dbReference type="InterPro" id="IPR036386">
    <property type="entry name" value="HscB_C_sf"/>
</dbReference>
<dbReference type="InterPro" id="IPR036411">
    <property type="entry name" value="TorD-like_sf"/>
</dbReference>
<dbReference type="InterPro" id="IPR050289">
    <property type="entry name" value="TorD/DmsD_chaperones"/>
</dbReference>
<dbReference type="NCBIfam" id="NF003442">
    <property type="entry name" value="PRK04976.1"/>
    <property type="match status" value="1"/>
</dbReference>
<dbReference type="PANTHER" id="PTHR34227:SF11">
    <property type="entry name" value="CHAPERONE PROTEIN TORD"/>
    <property type="match status" value="1"/>
</dbReference>
<dbReference type="PANTHER" id="PTHR34227">
    <property type="entry name" value="CHAPERONE PROTEIN YCDY"/>
    <property type="match status" value="1"/>
</dbReference>
<dbReference type="Pfam" id="PF02613">
    <property type="entry name" value="Nitrate_red_del"/>
    <property type="match status" value="1"/>
</dbReference>
<dbReference type="SUPFAM" id="SSF89155">
    <property type="entry name" value="TorD-like"/>
    <property type="match status" value="1"/>
</dbReference>
<evidence type="ECO:0000255" key="1">
    <source>
        <dbReference type="HAMAP-Rule" id="MF_01150"/>
    </source>
</evidence>
<organism>
    <name type="scientific">Shigella boydii serotype 18 (strain CDC 3083-94 / BS512)</name>
    <dbReference type="NCBI Taxonomy" id="344609"/>
    <lineage>
        <taxon>Bacteria</taxon>
        <taxon>Pseudomonadati</taxon>
        <taxon>Pseudomonadota</taxon>
        <taxon>Gammaproteobacteria</taxon>
        <taxon>Enterobacterales</taxon>
        <taxon>Enterobacteriaceae</taxon>
        <taxon>Shigella</taxon>
    </lineage>
</organism>
<reference key="1">
    <citation type="submission" date="2008-05" db="EMBL/GenBank/DDBJ databases">
        <title>Complete sequence of Shigella boydii serotype 18 strain BS512.</title>
        <authorList>
            <person name="Rasko D.A."/>
            <person name="Rosovitz M."/>
            <person name="Maurelli A.T."/>
            <person name="Myers G."/>
            <person name="Seshadri R."/>
            <person name="Cer R."/>
            <person name="Jiang L."/>
            <person name="Ravel J."/>
            <person name="Sebastian Y."/>
        </authorList>
    </citation>
    <scope>NUCLEOTIDE SEQUENCE [LARGE SCALE GENOMIC DNA]</scope>
    <source>
        <strain>CDC 3083-94 / BS512</strain>
    </source>
</reference>
<accession>B2TTQ0</accession>
<sequence length="199" mass="22416">MTTLTAQQIACVYAWLAQLFSRELDDEQLTQIASAQMAEWFSLLKSEPPLAAAVNELENCIATLTVRDDARLELAADFCGLFLMTDKQAALPYASAYKQDEQEIKRLLVEAGMETSGNFNEPADHLAIYLELLSHLHFSLGEGTVPARRIDSLRQKTLTALWQWLPEFAARCHQYDSFGFYAALSQLLLVLVECDHQNK</sequence>
<keyword id="KW-0143">Chaperone</keyword>
<keyword id="KW-0963">Cytoplasm</keyword>
<keyword id="KW-1185">Reference proteome</keyword>
<protein>
    <recommendedName>
        <fullName evidence="1">Chaperone protein TorD</fullName>
    </recommendedName>
</protein>